<name>BBE10_ARATH</name>
<gene>
    <name evidence="8" type="ordered locus">At1g30720</name>
    <name evidence="9" type="ORF">T5I8.17</name>
</gene>
<keyword id="KW-0134">Cell wall</keyword>
<keyword id="KW-1015">Disulfide bond</keyword>
<keyword id="KW-0274">FAD</keyword>
<keyword id="KW-0285">Flavoprotein</keyword>
<keyword id="KW-0325">Glycoprotein</keyword>
<keyword id="KW-0547">Nucleotide-binding</keyword>
<keyword id="KW-0560">Oxidoreductase</keyword>
<keyword id="KW-1185">Reference proteome</keyword>
<keyword id="KW-0964">Secreted</keyword>
<keyword id="KW-0732">Signal</keyword>
<organism>
    <name type="scientific">Arabidopsis thaliana</name>
    <name type="common">Mouse-ear cress</name>
    <dbReference type="NCBI Taxonomy" id="3702"/>
    <lineage>
        <taxon>Eukaryota</taxon>
        <taxon>Viridiplantae</taxon>
        <taxon>Streptophyta</taxon>
        <taxon>Embryophyta</taxon>
        <taxon>Tracheophyta</taxon>
        <taxon>Spermatophyta</taxon>
        <taxon>Magnoliopsida</taxon>
        <taxon>eudicotyledons</taxon>
        <taxon>Gunneridae</taxon>
        <taxon>Pentapetalae</taxon>
        <taxon>rosids</taxon>
        <taxon>malvids</taxon>
        <taxon>Brassicales</taxon>
        <taxon>Brassicaceae</taxon>
        <taxon>Camelineae</taxon>
        <taxon>Arabidopsis</taxon>
    </lineage>
</organism>
<protein>
    <recommendedName>
        <fullName evidence="6">Berberine bridge enzyme-like 10</fullName>
        <shortName evidence="6">AtBBE-like 10</shortName>
        <ecNumber evidence="1">1.1.1.-</ecNumber>
    </recommendedName>
</protein>
<dbReference type="EC" id="1.1.1.-" evidence="1"/>
<dbReference type="EMBL" id="AC007060">
    <property type="protein sequence ID" value="AAD25759.1"/>
    <property type="molecule type" value="Genomic_DNA"/>
</dbReference>
<dbReference type="EMBL" id="CP002684">
    <property type="protein sequence ID" value="AEE31264.1"/>
    <property type="molecule type" value="Genomic_DNA"/>
</dbReference>
<dbReference type="EMBL" id="AK117684">
    <property type="protein sequence ID" value="BAC42336.1"/>
    <property type="molecule type" value="mRNA"/>
</dbReference>
<dbReference type="EMBL" id="AF370619">
    <property type="protein sequence ID" value="AAK43938.1"/>
    <property type="molecule type" value="mRNA"/>
</dbReference>
<dbReference type="PIR" id="G86432">
    <property type="entry name" value="G86432"/>
</dbReference>
<dbReference type="RefSeq" id="NP_174359.1">
    <property type="nucleotide sequence ID" value="NM_102808.4"/>
</dbReference>
<dbReference type="SMR" id="Q9SA87"/>
<dbReference type="FunCoup" id="Q9SA87">
    <property type="interactions" value="126"/>
</dbReference>
<dbReference type="STRING" id="3702.Q9SA87"/>
<dbReference type="GlyGen" id="Q9SA87">
    <property type="glycosylation" value="3 sites"/>
</dbReference>
<dbReference type="PaxDb" id="3702-AT1G30720.1"/>
<dbReference type="ProteomicsDB" id="240755"/>
<dbReference type="EnsemblPlants" id="AT1G30720.1">
    <property type="protein sequence ID" value="AT1G30720.1"/>
    <property type="gene ID" value="AT1G30720"/>
</dbReference>
<dbReference type="GeneID" id="839952"/>
<dbReference type="Gramene" id="AT1G30720.1">
    <property type="protein sequence ID" value="AT1G30720.1"/>
    <property type="gene ID" value="AT1G30720"/>
</dbReference>
<dbReference type="KEGG" id="ath:AT1G30720"/>
<dbReference type="Araport" id="AT1G30720"/>
<dbReference type="TAIR" id="AT1G30720">
    <property type="gene designation" value="ATBBE10"/>
</dbReference>
<dbReference type="eggNOG" id="ENOG502QVGN">
    <property type="taxonomic scope" value="Eukaryota"/>
</dbReference>
<dbReference type="HOGENOM" id="CLU_018354_6_0_1"/>
<dbReference type="InParanoid" id="Q9SA87"/>
<dbReference type="OMA" id="WKNEQSI"/>
<dbReference type="OrthoDB" id="407275at2759"/>
<dbReference type="PhylomeDB" id="Q9SA87"/>
<dbReference type="BioCyc" id="ARA:AT1G30720-MONOMER"/>
<dbReference type="PRO" id="PR:Q9SA87"/>
<dbReference type="Proteomes" id="UP000006548">
    <property type="component" value="Chromosome 1"/>
</dbReference>
<dbReference type="ExpressionAtlas" id="Q9SA87">
    <property type="expression patterns" value="baseline and differential"/>
</dbReference>
<dbReference type="GO" id="GO:0005576">
    <property type="term" value="C:extracellular region"/>
    <property type="evidence" value="ECO:0007669"/>
    <property type="project" value="UniProtKB-KW"/>
</dbReference>
<dbReference type="GO" id="GO:0009505">
    <property type="term" value="C:plant-type cell wall"/>
    <property type="evidence" value="ECO:0000250"/>
    <property type="project" value="UniProtKB"/>
</dbReference>
<dbReference type="GO" id="GO:0099503">
    <property type="term" value="C:secretory vesicle"/>
    <property type="evidence" value="ECO:0007005"/>
    <property type="project" value="TAIR"/>
</dbReference>
<dbReference type="GO" id="GO:0071949">
    <property type="term" value="F:FAD binding"/>
    <property type="evidence" value="ECO:0007669"/>
    <property type="project" value="InterPro"/>
</dbReference>
<dbReference type="GO" id="GO:0016491">
    <property type="term" value="F:oxidoreductase activity"/>
    <property type="evidence" value="ECO:0007669"/>
    <property type="project" value="UniProtKB-KW"/>
</dbReference>
<dbReference type="GO" id="GO:0071456">
    <property type="term" value="P:cellular response to hypoxia"/>
    <property type="evidence" value="ECO:0007007"/>
    <property type="project" value="TAIR"/>
</dbReference>
<dbReference type="FunFam" id="3.30.43.10:FF:000004">
    <property type="entry name" value="Berberine bridge enzyme-like 15"/>
    <property type="match status" value="1"/>
</dbReference>
<dbReference type="Gene3D" id="3.30.465.10">
    <property type="match status" value="1"/>
</dbReference>
<dbReference type="Gene3D" id="3.40.462.20">
    <property type="match status" value="1"/>
</dbReference>
<dbReference type="Gene3D" id="3.30.43.10">
    <property type="entry name" value="Uridine Diphospho-n-acetylenolpyruvylglucosamine Reductase, domain 2"/>
    <property type="match status" value="1"/>
</dbReference>
<dbReference type="InterPro" id="IPR012951">
    <property type="entry name" value="BBE"/>
</dbReference>
<dbReference type="InterPro" id="IPR016166">
    <property type="entry name" value="FAD-bd_PCMH"/>
</dbReference>
<dbReference type="InterPro" id="IPR036318">
    <property type="entry name" value="FAD-bd_PCMH-like_sf"/>
</dbReference>
<dbReference type="InterPro" id="IPR016167">
    <property type="entry name" value="FAD-bd_PCMH_sub1"/>
</dbReference>
<dbReference type="InterPro" id="IPR016169">
    <property type="entry name" value="FAD-bd_PCMH_sub2"/>
</dbReference>
<dbReference type="InterPro" id="IPR006094">
    <property type="entry name" value="Oxid_FAD_bind_N"/>
</dbReference>
<dbReference type="PANTHER" id="PTHR32448">
    <property type="entry name" value="OS08G0158400 PROTEIN"/>
    <property type="match status" value="1"/>
</dbReference>
<dbReference type="Pfam" id="PF08031">
    <property type="entry name" value="BBE"/>
    <property type="match status" value="1"/>
</dbReference>
<dbReference type="Pfam" id="PF01565">
    <property type="entry name" value="FAD_binding_4"/>
    <property type="match status" value="1"/>
</dbReference>
<dbReference type="SUPFAM" id="SSF56176">
    <property type="entry name" value="FAD-binding/transporter-associated domain-like"/>
    <property type="match status" value="1"/>
</dbReference>
<dbReference type="PROSITE" id="PS51387">
    <property type="entry name" value="FAD_PCMH"/>
    <property type="match status" value="1"/>
</dbReference>
<sequence>MEKLLVISLLLLISTSVTTSQSVTDPIAFLRCLDRQPTDPTSPNSAVAYIPTNSSFTTVLRSRIPNLRFDKPTTPKPISVVAAATWTHIQAAVGCARELSLQVRIRSGGHDFEGLSYTSTVPFFVLDMFGFKTVDVNLTERTAWVDSGATLGELYYRISEKSNVLGFPAGLSTTLGVGGHFSGGGYGNLMRKYGLSVDNVFGSGIVDSNGNIFTDRVSMGEDRFWAIRGGGAASYGVVLGYKIQLVPVPEKVTVFKVGKTVGEGAVDLIMKWQSFAHSTDRNLFVRLTLTLVNGTKPGENTVLATFIGMYLGRSDKLLTVMNRDFPELKLKKTDCTEMRWIDSVLFWDDYPVGTPTSVLLNPLVAKKLFMKRKSDYVKRLISRTDLGLILKKLVEVEKVKMNWNPYGGRMGEIPSSRTPFPHRAGNLFNIEYIIDWSEAGDNVEKKYLALANEFYRFMTPYVSSNPREAFLNYRDLDIGSSVKSTYQEGKIYGAKYFKENFERLVDIKTTIDAENFWKNEQSIPVRR</sequence>
<comment type="cofactor">
    <cofactor evidence="1">
        <name>FAD</name>
        <dbReference type="ChEBI" id="CHEBI:57692"/>
    </cofactor>
</comment>
<comment type="subcellular location">
    <subcellularLocation>
        <location evidence="1">Secreted</location>
        <location evidence="1">Cell wall</location>
    </subcellularLocation>
</comment>
<comment type="similarity">
    <text evidence="7">Belongs to the oxygen-dependent FAD-linked oxidoreductase family.</text>
</comment>
<evidence type="ECO:0000250" key="1">
    <source>
        <dbReference type="UniProtKB" id="O64743"/>
    </source>
</evidence>
<evidence type="ECO:0000250" key="2">
    <source>
        <dbReference type="UniProtKB" id="Q9FI21"/>
    </source>
</evidence>
<evidence type="ECO:0000255" key="3"/>
<evidence type="ECO:0000255" key="4">
    <source>
        <dbReference type="PROSITE-ProRule" id="PRU00498"/>
    </source>
</evidence>
<evidence type="ECO:0000255" key="5">
    <source>
        <dbReference type="PROSITE-ProRule" id="PRU00718"/>
    </source>
</evidence>
<evidence type="ECO:0000303" key="6">
    <source>
    </source>
</evidence>
<evidence type="ECO:0000305" key="7"/>
<evidence type="ECO:0000312" key="8">
    <source>
        <dbReference type="Araport" id="AT1G30720"/>
    </source>
</evidence>
<evidence type="ECO:0000312" key="9">
    <source>
        <dbReference type="EMBL" id="AAD25759.1"/>
    </source>
</evidence>
<reference key="1">
    <citation type="journal article" date="2000" name="Nature">
        <title>Sequence and analysis of chromosome 1 of the plant Arabidopsis thaliana.</title>
        <authorList>
            <person name="Theologis A."/>
            <person name="Ecker J.R."/>
            <person name="Palm C.J."/>
            <person name="Federspiel N.A."/>
            <person name="Kaul S."/>
            <person name="White O."/>
            <person name="Alonso J."/>
            <person name="Altafi H."/>
            <person name="Araujo R."/>
            <person name="Bowman C.L."/>
            <person name="Brooks S.Y."/>
            <person name="Buehler E."/>
            <person name="Chan A."/>
            <person name="Chao Q."/>
            <person name="Chen H."/>
            <person name="Cheuk R.F."/>
            <person name="Chin C.W."/>
            <person name="Chung M.K."/>
            <person name="Conn L."/>
            <person name="Conway A.B."/>
            <person name="Conway A.R."/>
            <person name="Creasy T.H."/>
            <person name="Dewar K."/>
            <person name="Dunn P."/>
            <person name="Etgu P."/>
            <person name="Feldblyum T.V."/>
            <person name="Feng J.-D."/>
            <person name="Fong B."/>
            <person name="Fujii C.Y."/>
            <person name="Gill J.E."/>
            <person name="Goldsmith A.D."/>
            <person name="Haas B."/>
            <person name="Hansen N.F."/>
            <person name="Hughes B."/>
            <person name="Huizar L."/>
            <person name="Hunter J.L."/>
            <person name="Jenkins J."/>
            <person name="Johnson-Hopson C."/>
            <person name="Khan S."/>
            <person name="Khaykin E."/>
            <person name="Kim C.J."/>
            <person name="Koo H.L."/>
            <person name="Kremenetskaia I."/>
            <person name="Kurtz D.B."/>
            <person name="Kwan A."/>
            <person name="Lam B."/>
            <person name="Langin-Hooper S."/>
            <person name="Lee A."/>
            <person name="Lee J.M."/>
            <person name="Lenz C.A."/>
            <person name="Li J.H."/>
            <person name="Li Y.-P."/>
            <person name="Lin X."/>
            <person name="Liu S.X."/>
            <person name="Liu Z.A."/>
            <person name="Luros J.S."/>
            <person name="Maiti R."/>
            <person name="Marziali A."/>
            <person name="Militscher J."/>
            <person name="Miranda M."/>
            <person name="Nguyen M."/>
            <person name="Nierman W.C."/>
            <person name="Osborne B.I."/>
            <person name="Pai G."/>
            <person name="Peterson J."/>
            <person name="Pham P.K."/>
            <person name="Rizzo M."/>
            <person name="Rooney T."/>
            <person name="Rowley D."/>
            <person name="Sakano H."/>
            <person name="Salzberg S.L."/>
            <person name="Schwartz J.R."/>
            <person name="Shinn P."/>
            <person name="Southwick A.M."/>
            <person name="Sun H."/>
            <person name="Tallon L.J."/>
            <person name="Tambunga G."/>
            <person name="Toriumi M.J."/>
            <person name="Town C.D."/>
            <person name="Utterback T."/>
            <person name="Van Aken S."/>
            <person name="Vaysberg M."/>
            <person name="Vysotskaia V.S."/>
            <person name="Walker M."/>
            <person name="Wu D."/>
            <person name="Yu G."/>
            <person name="Fraser C.M."/>
            <person name="Venter J.C."/>
            <person name="Davis R.W."/>
        </authorList>
    </citation>
    <scope>NUCLEOTIDE SEQUENCE [LARGE SCALE GENOMIC DNA]</scope>
    <source>
        <strain>cv. Columbia</strain>
    </source>
</reference>
<reference key="2">
    <citation type="journal article" date="2017" name="Plant J.">
        <title>Araport11: a complete reannotation of the Arabidopsis thaliana reference genome.</title>
        <authorList>
            <person name="Cheng C.Y."/>
            <person name="Krishnakumar V."/>
            <person name="Chan A.P."/>
            <person name="Thibaud-Nissen F."/>
            <person name="Schobel S."/>
            <person name="Town C.D."/>
        </authorList>
    </citation>
    <scope>GENOME REANNOTATION</scope>
    <source>
        <strain>cv. Columbia</strain>
    </source>
</reference>
<reference key="3">
    <citation type="journal article" date="2002" name="Science">
        <title>Functional annotation of a full-length Arabidopsis cDNA collection.</title>
        <authorList>
            <person name="Seki M."/>
            <person name="Narusaka M."/>
            <person name="Kamiya A."/>
            <person name="Ishida J."/>
            <person name="Satou M."/>
            <person name="Sakurai T."/>
            <person name="Nakajima M."/>
            <person name="Enju A."/>
            <person name="Akiyama K."/>
            <person name="Oono Y."/>
            <person name="Muramatsu M."/>
            <person name="Hayashizaki Y."/>
            <person name="Kawai J."/>
            <person name="Carninci P."/>
            <person name="Itoh M."/>
            <person name="Ishii Y."/>
            <person name="Arakawa T."/>
            <person name="Shibata K."/>
            <person name="Shinagawa A."/>
            <person name="Shinozaki K."/>
        </authorList>
    </citation>
    <scope>NUCLEOTIDE SEQUENCE [LARGE SCALE MRNA]</scope>
    <source>
        <strain>cv. Columbia</strain>
    </source>
</reference>
<reference key="4">
    <citation type="journal article" date="2003" name="Science">
        <title>Empirical analysis of transcriptional activity in the Arabidopsis genome.</title>
        <authorList>
            <person name="Yamada K."/>
            <person name="Lim J."/>
            <person name="Dale J.M."/>
            <person name="Chen H."/>
            <person name="Shinn P."/>
            <person name="Palm C.J."/>
            <person name="Southwick A.M."/>
            <person name="Wu H.C."/>
            <person name="Kim C.J."/>
            <person name="Nguyen M."/>
            <person name="Pham P.K."/>
            <person name="Cheuk R.F."/>
            <person name="Karlin-Newmann G."/>
            <person name="Liu S.X."/>
            <person name="Lam B."/>
            <person name="Sakano H."/>
            <person name="Wu T."/>
            <person name="Yu G."/>
            <person name="Miranda M."/>
            <person name="Quach H.L."/>
            <person name="Tripp M."/>
            <person name="Chang C.H."/>
            <person name="Lee J.M."/>
            <person name="Toriumi M.J."/>
            <person name="Chan M.M."/>
            <person name="Tang C.C."/>
            <person name="Onodera C.S."/>
            <person name="Deng J.M."/>
            <person name="Akiyama K."/>
            <person name="Ansari Y."/>
            <person name="Arakawa T."/>
            <person name="Banh J."/>
            <person name="Banno F."/>
            <person name="Bowser L."/>
            <person name="Brooks S.Y."/>
            <person name="Carninci P."/>
            <person name="Chao Q."/>
            <person name="Choy N."/>
            <person name="Enju A."/>
            <person name="Goldsmith A.D."/>
            <person name="Gurjal M."/>
            <person name="Hansen N.F."/>
            <person name="Hayashizaki Y."/>
            <person name="Johnson-Hopson C."/>
            <person name="Hsuan V.W."/>
            <person name="Iida K."/>
            <person name="Karnes M."/>
            <person name="Khan S."/>
            <person name="Koesema E."/>
            <person name="Ishida J."/>
            <person name="Jiang P.X."/>
            <person name="Jones T."/>
            <person name="Kawai J."/>
            <person name="Kamiya A."/>
            <person name="Meyers C."/>
            <person name="Nakajima M."/>
            <person name="Narusaka M."/>
            <person name="Seki M."/>
            <person name="Sakurai T."/>
            <person name="Satou M."/>
            <person name="Tamse R."/>
            <person name="Vaysberg M."/>
            <person name="Wallender E.K."/>
            <person name="Wong C."/>
            <person name="Yamamura Y."/>
            <person name="Yuan S."/>
            <person name="Shinozaki K."/>
            <person name="Davis R.W."/>
            <person name="Theologis A."/>
            <person name="Ecker J.R."/>
        </authorList>
    </citation>
    <scope>NUCLEOTIDE SEQUENCE [LARGE SCALE MRNA]</scope>
    <source>
        <strain>cv. Columbia</strain>
    </source>
</reference>
<reference key="5">
    <citation type="journal article" date="2015" name="J. Biol. Chem.">
        <title>Oxidation of monolignols by members of the berberine bridge enzyme family suggests a role in plant cell wall metabolism.</title>
        <authorList>
            <person name="Daniel B."/>
            <person name="Pavkov-Keller T."/>
            <person name="Steiner B."/>
            <person name="Dordic A."/>
            <person name="Gutmann A."/>
            <person name="Nidetzky B."/>
            <person name="Sensen C.W."/>
            <person name="van der Graaff E."/>
            <person name="Wallner S."/>
            <person name="Gruber K."/>
            <person name="Macheroux P."/>
        </authorList>
    </citation>
    <scope>GENE FAMILY</scope>
    <scope>NOMENCLATURE</scope>
</reference>
<accession>Q9SA87</accession>
<feature type="signal peptide" evidence="3">
    <location>
        <begin position="1"/>
        <end position="20"/>
    </location>
</feature>
<feature type="chain" id="PRO_5008180354" description="Berberine bridge enzyme-like 10">
    <location>
        <begin position="21"/>
        <end position="527"/>
    </location>
</feature>
<feature type="domain" description="FAD-binding PCMH-type" evidence="5">
    <location>
        <begin position="73"/>
        <end position="248"/>
    </location>
</feature>
<feature type="modified residue" description="Pros-8alpha-FAD histidine" evidence="2">
    <location>
        <position position="110"/>
    </location>
</feature>
<feature type="glycosylation site" description="N-linked (GlcNAc...) asparagine" evidence="4">
    <location>
        <position position="53"/>
    </location>
</feature>
<feature type="glycosylation site" description="N-linked (GlcNAc...) asparagine" evidence="4">
    <location>
        <position position="137"/>
    </location>
</feature>
<feature type="glycosylation site" description="N-linked (GlcNAc...) asparagine" evidence="4">
    <location>
        <position position="293"/>
    </location>
</feature>
<feature type="disulfide bond" evidence="1">
    <location>
        <begin position="32"/>
        <end position="95"/>
    </location>
</feature>
<proteinExistence type="evidence at transcript level"/>